<organism>
    <name type="scientific">Drosophila sechellia</name>
    <name type="common">Fruit fly</name>
    <dbReference type="NCBI Taxonomy" id="7238"/>
    <lineage>
        <taxon>Eukaryota</taxon>
        <taxon>Metazoa</taxon>
        <taxon>Ecdysozoa</taxon>
        <taxon>Arthropoda</taxon>
        <taxon>Hexapoda</taxon>
        <taxon>Insecta</taxon>
        <taxon>Pterygota</taxon>
        <taxon>Neoptera</taxon>
        <taxon>Endopterygota</taxon>
        <taxon>Diptera</taxon>
        <taxon>Brachycera</taxon>
        <taxon>Muscomorpha</taxon>
        <taxon>Ephydroidea</taxon>
        <taxon>Drosophilidae</taxon>
        <taxon>Drosophila</taxon>
        <taxon>Sophophora</taxon>
    </lineage>
</organism>
<gene>
    <name evidence="1" type="primary">Mocs2B</name>
    <name evidence="2" type="synonym">Mocs2</name>
    <name type="ORF">GM17748</name>
</gene>
<accession>B4IJG7</accession>
<proteinExistence type="inferred from homology"/>
<protein>
    <recommendedName>
        <fullName evidence="2">Molybdopterin synthase catalytic subunit</fullName>
        <ecNumber evidence="2">2.8.1.12</ecNumber>
    </recommendedName>
    <alternativeName>
        <fullName evidence="2">Molybdenum cofactor synthesis protein 2 large subunit</fullName>
    </alternativeName>
    <alternativeName>
        <fullName evidence="2">Molybdenum cofactor synthesis protein 2B</fullName>
        <shortName evidence="2">MOCS2B</shortName>
    </alternativeName>
</protein>
<comment type="function">
    <text evidence="2">Catalytic subunit of the molybdopterin synthase complex, a complex that catalyzes the conversion of precursor Z into molybdopterin. Acts by mediating the incorporation of 2 sulfur atoms from thiocarboxylated Mocs2A into precursor Z to generate a dithiolene group.</text>
</comment>
<comment type="catalytic activity">
    <reaction evidence="2">
        <text>2 [molybdopterin-synthase sulfur-carrier protein]-C-terminal-Gly-aminoethanethioate + cyclic pyranopterin phosphate + H2O = molybdopterin + 2 [molybdopterin-synthase sulfur-carrier protein]-C-terminal Gly-Gly + 2 H(+)</text>
        <dbReference type="Rhea" id="RHEA:26333"/>
        <dbReference type="Rhea" id="RHEA-COMP:12202"/>
        <dbReference type="Rhea" id="RHEA-COMP:19907"/>
        <dbReference type="ChEBI" id="CHEBI:15377"/>
        <dbReference type="ChEBI" id="CHEBI:15378"/>
        <dbReference type="ChEBI" id="CHEBI:58698"/>
        <dbReference type="ChEBI" id="CHEBI:59648"/>
        <dbReference type="ChEBI" id="CHEBI:90778"/>
        <dbReference type="ChEBI" id="CHEBI:232372"/>
        <dbReference type="EC" id="2.8.1.12"/>
    </reaction>
</comment>
<comment type="pathway">
    <text evidence="2">Cofactor biosynthesis; molybdopterin biosynthesis.</text>
</comment>
<comment type="subunit">
    <text evidence="2">Heterotetramer; composed of 2 small (Mocs2A) and 2 large (Mocs2B) subunits.</text>
</comment>
<comment type="subcellular location">
    <subcellularLocation>
        <location evidence="2">Cytoplasm</location>
    </subcellularLocation>
</comment>
<comment type="miscellaneous">
    <text>This protein is produced by a bicistronic gene which also produces the small subunit (Mocs2A).</text>
</comment>
<comment type="similarity">
    <text evidence="2">Belongs to the MoaE family. MOCS2B subfamily.</text>
</comment>
<feature type="chain" id="PRO_0000369340" description="Molybdopterin synthase catalytic subunit">
    <location>
        <begin position="1"/>
        <end position="367"/>
    </location>
</feature>
<feature type="region of interest" description="Disordered" evidence="3">
    <location>
        <begin position="326"/>
        <end position="345"/>
    </location>
</feature>
<feature type="binding site" evidence="2">
    <location>
        <begin position="101"/>
        <end position="102"/>
    </location>
    <ligand>
        <name>substrate</name>
    </ligand>
</feature>
<feature type="binding site" evidence="2">
    <location>
        <position position="117"/>
    </location>
    <ligand>
        <name>substrate</name>
    </ligand>
</feature>
<feature type="binding site" evidence="2">
    <location>
        <begin position="124"/>
        <end position="126"/>
    </location>
    <ligand>
        <name>substrate</name>
    </ligand>
</feature>
<reference key="1">
    <citation type="journal article" date="2007" name="Nature">
        <title>Evolution of genes and genomes on the Drosophila phylogeny.</title>
        <authorList>
            <consortium name="Drosophila 12 genomes consortium"/>
        </authorList>
    </citation>
    <scope>NUCLEOTIDE SEQUENCE [LARGE SCALE GENOMIC DNA]</scope>
    <source>
        <strain>Rob3c / Tucson 14021-0248.25</strain>
    </source>
</reference>
<sequence>MDHVKLVNDPIDIAHIHQLLADEGCGASSVFVGTTRDNFQGKKVLSLAYEAYDSMALKEMNKICSDLRSKWLDLKHIVIYHRLGTVPVCQASVVIAASSPHRSEALESVSFAIDQLKTRVPIWKKEIYEGDNDSEWKENKESIRPKKSKSGFNYAACPCKVEESHDVPRTLVQIRVNDAELAKRLECFVNRKRDEINSQNVIDFKSSFVSSDKDLSDSCARTQSTIIKQEQSNCHLKVRRVNNRCGPQQMEMRPNYELELNKLMGSRDGQTDPTKEMRKSLPNSRLQAIESYMGLTTDNEENIFSRIKRVENRLLQLESISPEYRHFTKREPSSMEAAPPKKIRKKSYSAQELSAFIQKVKDGSEFS</sequence>
<evidence type="ECO:0000250" key="1">
    <source>
        <dbReference type="UniProtKB" id="Q9VBX2"/>
    </source>
</evidence>
<evidence type="ECO:0000255" key="2">
    <source>
        <dbReference type="HAMAP-Rule" id="MF_03052"/>
    </source>
</evidence>
<evidence type="ECO:0000256" key="3">
    <source>
        <dbReference type="SAM" id="MobiDB-lite"/>
    </source>
</evidence>
<name>MOC2B_DROSE</name>
<dbReference type="EC" id="2.8.1.12" evidence="2"/>
<dbReference type="EMBL" id="CH480848">
    <property type="protein sequence ID" value="EDW51158.1"/>
    <property type="molecule type" value="Genomic_DNA"/>
</dbReference>
<dbReference type="SMR" id="B4IJG7"/>
<dbReference type="STRING" id="7238.B4IJG7"/>
<dbReference type="EnsemblMetazoa" id="FBtr0200733">
    <property type="protein sequence ID" value="FBpp0199225"/>
    <property type="gene ID" value="FBgn0172656"/>
</dbReference>
<dbReference type="EnsemblMetazoa" id="XM_002043841.2">
    <property type="protein sequence ID" value="XP_002043877.1"/>
    <property type="gene ID" value="LOC6619662"/>
</dbReference>
<dbReference type="GeneID" id="6619662"/>
<dbReference type="KEGG" id="dse:6619662"/>
<dbReference type="CTD" id="43017"/>
<dbReference type="HOGENOM" id="CLU_045449_0_0_1"/>
<dbReference type="OMA" id="KIRSQWN"/>
<dbReference type="OrthoDB" id="14078at7215"/>
<dbReference type="PhylomeDB" id="B4IJG7"/>
<dbReference type="UniPathway" id="UPA00344"/>
<dbReference type="Proteomes" id="UP000001292">
    <property type="component" value="Unassembled WGS sequence"/>
</dbReference>
<dbReference type="GO" id="GO:0140672">
    <property type="term" value="C:ATAC complex"/>
    <property type="evidence" value="ECO:0007669"/>
    <property type="project" value="EnsemblMetazoa"/>
</dbReference>
<dbReference type="GO" id="GO:0005829">
    <property type="term" value="C:cytosol"/>
    <property type="evidence" value="ECO:0000250"/>
    <property type="project" value="UniProtKB"/>
</dbReference>
<dbReference type="GO" id="GO:1990140">
    <property type="term" value="C:molybdopterin synthase complex"/>
    <property type="evidence" value="ECO:0000250"/>
    <property type="project" value="UniProtKB"/>
</dbReference>
<dbReference type="GO" id="GO:0005700">
    <property type="term" value="C:polytene chromosome"/>
    <property type="evidence" value="ECO:0007669"/>
    <property type="project" value="EnsemblMetazoa"/>
</dbReference>
<dbReference type="GO" id="GO:0030366">
    <property type="term" value="F:molybdopterin synthase activity"/>
    <property type="evidence" value="ECO:0007669"/>
    <property type="project" value="UniProtKB-UniRule"/>
</dbReference>
<dbReference type="GO" id="GO:0006338">
    <property type="term" value="P:chromatin remodeling"/>
    <property type="evidence" value="ECO:0007669"/>
    <property type="project" value="EnsemblMetazoa"/>
</dbReference>
<dbReference type="GO" id="GO:0006777">
    <property type="term" value="P:Mo-molybdopterin cofactor biosynthetic process"/>
    <property type="evidence" value="ECO:0000250"/>
    <property type="project" value="UniProtKB"/>
</dbReference>
<dbReference type="CDD" id="cd00756">
    <property type="entry name" value="MoaE"/>
    <property type="match status" value="1"/>
</dbReference>
<dbReference type="FunFam" id="3.90.1170.40:FF:000002">
    <property type="entry name" value="Molybdopterin synthase catalytic subunit"/>
    <property type="match status" value="1"/>
</dbReference>
<dbReference type="Gene3D" id="3.90.1170.40">
    <property type="entry name" value="Molybdopterin biosynthesis MoaE subunit"/>
    <property type="match status" value="1"/>
</dbReference>
<dbReference type="HAMAP" id="MF_03052">
    <property type="entry name" value="MOC2B"/>
    <property type="match status" value="1"/>
</dbReference>
<dbReference type="InterPro" id="IPR036563">
    <property type="entry name" value="MoaE_sf"/>
</dbReference>
<dbReference type="InterPro" id="IPR028888">
    <property type="entry name" value="MOCS2B_euk"/>
</dbReference>
<dbReference type="InterPro" id="IPR003448">
    <property type="entry name" value="Mopterin_biosynth_MoaE"/>
</dbReference>
<dbReference type="PANTHER" id="PTHR23404">
    <property type="entry name" value="MOLYBDOPTERIN SYNTHASE RELATED"/>
    <property type="match status" value="1"/>
</dbReference>
<dbReference type="Pfam" id="PF02391">
    <property type="entry name" value="MoaE"/>
    <property type="match status" value="1"/>
</dbReference>
<dbReference type="SUPFAM" id="SSF54690">
    <property type="entry name" value="Molybdopterin synthase subunit MoaE"/>
    <property type="match status" value="1"/>
</dbReference>
<keyword id="KW-0963">Cytoplasm</keyword>
<keyword id="KW-0501">Molybdenum cofactor biosynthesis</keyword>
<keyword id="KW-1185">Reference proteome</keyword>
<keyword id="KW-0808">Transferase</keyword>